<protein>
    <recommendedName>
        <fullName>Oxysterols receptor LXR-beta</fullName>
    </recommendedName>
    <alternativeName>
        <fullName>Liver X receptor beta</fullName>
    </alternativeName>
    <alternativeName>
        <fullName>Nuclear receptor NER</fullName>
    </alternativeName>
    <alternativeName>
        <fullName>Nuclear receptor subfamily 1 group H member 2</fullName>
    </alternativeName>
    <alternativeName>
        <fullName>Ubiquitously-expressed nuclear receptor</fullName>
    </alternativeName>
</protein>
<evidence type="ECO:0000250" key="1">
    <source>
        <dbReference type="UniProtKB" id="Q60644"/>
    </source>
</evidence>
<evidence type="ECO:0000255" key="2">
    <source>
        <dbReference type="PROSITE-ProRule" id="PRU00407"/>
    </source>
</evidence>
<evidence type="ECO:0000255" key="3">
    <source>
        <dbReference type="PROSITE-ProRule" id="PRU01189"/>
    </source>
</evidence>
<evidence type="ECO:0000256" key="4">
    <source>
        <dbReference type="SAM" id="MobiDB-lite"/>
    </source>
</evidence>
<evidence type="ECO:0000269" key="5">
    <source>
    </source>
</evidence>
<evidence type="ECO:0000269" key="6">
    <source>
    </source>
</evidence>
<evidence type="ECO:0000269" key="7">
    <source>
    </source>
</evidence>
<evidence type="ECO:0000269" key="8">
    <source>
    </source>
</evidence>
<evidence type="ECO:0000303" key="9">
    <source>
    </source>
</evidence>
<evidence type="ECO:0000305" key="10"/>
<evidence type="ECO:0007829" key="11">
    <source>
        <dbReference type="PDB" id="4NQA"/>
    </source>
</evidence>
<evidence type="ECO:0007829" key="12">
    <source>
        <dbReference type="PDB" id="4RAK"/>
    </source>
</evidence>
<evidence type="ECO:0007829" key="13">
    <source>
        <dbReference type="PDB" id="6S4N"/>
    </source>
</evidence>
<evidence type="ECO:0007829" key="14">
    <source>
        <dbReference type="PDB" id="6S5K"/>
    </source>
</evidence>
<keyword id="KW-0002">3D-structure</keyword>
<keyword id="KW-0010">Activator</keyword>
<keyword id="KW-0025">Alternative splicing</keyword>
<keyword id="KW-0238">DNA-binding</keyword>
<keyword id="KW-1017">Isopeptide bond</keyword>
<keyword id="KW-0479">Metal-binding</keyword>
<keyword id="KW-0539">Nucleus</keyword>
<keyword id="KW-1267">Proteomics identification</keyword>
<keyword id="KW-0675">Receptor</keyword>
<keyword id="KW-1185">Reference proteome</keyword>
<keyword id="KW-0804">Transcription</keyword>
<keyword id="KW-0805">Transcription regulation</keyword>
<keyword id="KW-0832">Ubl conjugation</keyword>
<keyword id="KW-0862">Zinc</keyword>
<keyword id="KW-0863">Zinc-finger</keyword>
<dbReference type="EMBL" id="U07132">
    <property type="protein sequence ID" value="AAA61783.1"/>
    <property type="molecule type" value="mRNA"/>
</dbReference>
<dbReference type="EMBL" id="AK290855">
    <property type="protein sequence ID" value="BAF83544.1"/>
    <property type="molecule type" value="mRNA"/>
</dbReference>
<dbReference type="EMBL" id="AK297978">
    <property type="protein sequence ID" value="BAG60288.1"/>
    <property type="molecule type" value="mRNA"/>
</dbReference>
<dbReference type="EMBL" id="AC008655">
    <property type="status" value="NOT_ANNOTATED_CDS"/>
    <property type="molecule type" value="Genomic_DNA"/>
</dbReference>
<dbReference type="EMBL" id="BC007790">
    <property type="protein sequence ID" value="AAH07790.1"/>
    <property type="molecule type" value="mRNA"/>
</dbReference>
<dbReference type="EMBL" id="BC033500">
    <property type="protein sequence ID" value="AAH33500.1"/>
    <property type="molecule type" value="mRNA"/>
</dbReference>
<dbReference type="EMBL" id="BC047750">
    <property type="protein sequence ID" value="AAH47750.1"/>
    <property type="molecule type" value="mRNA"/>
</dbReference>
<dbReference type="EMBL" id="BC074500">
    <property type="protein sequence ID" value="AAH74500.1"/>
    <property type="molecule type" value="mRNA"/>
</dbReference>
<dbReference type="EMBL" id="U14534">
    <property type="protein sequence ID" value="AAA58594.1"/>
    <property type="molecule type" value="mRNA"/>
</dbReference>
<dbReference type="CCDS" id="CCDS42593.1">
    <molecule id="P55055-1"/>
</dbReference>
<dbReference type="CCDS" id="CCDS58673.1">
    <molecule id="P55055-2"/>
</dbReference>
<dbReference type="PIR" id="JC4014">
    <property type="entry name" value="JC4014"/>
</dbReference>
<dbReference type="RefSeq" id="NP_001243576.2">
    <molecule id="P55055-2"/>
    <property type="nucleotide sequence ID" value="NM_001256647.3"/>
</dbReference>
<dbReference type="RefSeq" id="NP_009052.4">
    <molecule id="P55055-1"/>
    <property type="nucleotide sequence ID" value="NM_007121.7"/>
</dbReference>
<dbReference type="PDB" id="1P8D">
    <property type="method" value="X-ray"/>
    <property type="resolution" value="2.80 A"/>
    <property type="chains" value="A/B=213-460"/>
</dbReference>
<dbReference type="PDB" id="1PQ6">
    <property type="method" value="X-ray"/>
    <property type="resolution" value="2.40 A"/>
    <property type="chains" value="A/B/C/D=212-460"/>
</dbReference>
<dbReference type="PDB" id="1PQ9">
    <property type="method" value="X-ray"/>
    <property type="resolution" value="2.10 A"/>
    <property type="chains" value="A/B/C/D=212-460"/>
</dbReference>
<dbReference type="PDB" id="1PQC">
    <property type="method" value="X-ray"/>
    <property type="resolution" value="2.80 A"/>
    <property type="chains" value="A/B/C/D=212-460"/>
</dbReference>
<dbReference type="PDB" id="1UPV">
    <property type="method" value="X-ray"/>
    <property type="resolution" value="2.10 A"/>
    <property type="chains" value="A=208-460"/>
</dbReference>
<dbReference type="PDB" id="1UPW">
    <property type="method" value="X-ray"/>
    <property type="resolution" value="2.40 A"/>
    <property type="chains" value="A=208-460"/>
</dbReference>
<dbReference type="PDB" id="3KFC">
    <property type="method" value="X-ray"/>
    <property type="resolution" value="2.40 A"/>
    <property type="chains" value="A/B/C/D=212-460"/>
</dbReference>
<dbReference type="PDB" id="3L0E">
    <property type="method" value="X-ray"/>
    <property type="resolution" value="2.30 A"/>
    <property type="chains" value="A=212-460"/>
</dbReference>
<dbReference type="PDB" id="4DK7">
    <property type="method" value="X-ray"/>
    <property type="resolution" value="2.45 A"/>
    <property type="chains" value="A/C=218-460"/>
</dbReference>
<dbReference type="PDB" id="4DK8">
    <property type="method" value="X-ray"/>
    <property type="resolution" value="2.75 A"/>
    <property type="chains" value="A/C=218-460"/>
</dbReference>
<dbReference type="PDB" id="4NQA">
    <property type="method" value="X-ray"/>
    <property type="resolution" value="3.10 A"/>
    <property type="chains" value="B/I=72-460"/>
</dbReference>
<dbReference type="PDB" id="4RAK">
    <property type="method" value="X-ray"/>
    <property type="resolution" value="2.04 A"/>
    <property type="chains" value="A/B=213-460"/>
</dbReference>
<dbReference type="PDB" id="5HJP">
    <property type="method" value="X-ray"/>
    <property type="resolution" value="2.60 A"/>
    <property type="chains" value="B/D=216-460"/>
</dbReference>
<dbReference type="PDB" id="5I4V">
    <property type="method" value="X-ray"/>
    <property type="resolution" value="2.61 A"/>
    <property type="chains" value="A/E=210-460"/>
</dbReference>
<dbReference type="PDB" id="5JY3">
    <property type="method" value="X-ray"/>
    <property type="resolution" value="2.40 A"/>
    <property type="chains" value="A/B/C/D=213-460"/>
</dbReference>
<dbReference type="PDB" id="5KYA">
    <property type="method" value="X-ray"/>
    <property type="resolution" value="2.60 A"/>
    <property type="chains" value="A/E=210-460"/>
</dbReference>
<dbReference type="PDB" id="5KYJ">
    <property type="method" value="X-ray"/>
    <property type="resolution" value="2.80 A"/>
    <property type="chains" value="A/E=210-460"/>
</dbReference>
<dbReference type="PDB" id="6JIO">
    <property type="method" value="X-ray"/>
    <property type="resolution" value="2.60 A"/>
    <property type="chains" value="A/B/C/D=214-460"/>
</dbReference>
<dbReference type="PDB" id="6K9G">
    <property type="method" value="X-ray"/>
    <property type="resolution" value="2.80 A"/>
    <property type="chains" value="A/B/C/D=214-460"/>
</dbReference>
<dbReference type="PDB" id="6K9H">
    <property type="method" value="X-ray"/>
    <property type="resolution" value="2.50 A"/>
    <property type="chains" value="A/B=214-460"/>
</dbReference>
<dbReference type="PDB" id="6K9M">
    <property type="method" value="X-ray"/>
    <property type="resolution" value="2.90 A"/>
    <property type="chains" value="A/B/C/D=214-460"/>
</dbReference>
<dbReference type="PDB" id="6S4N">
    <property type="method" value="X-ray"/>
    <property type="resolution" value="1.90 A"/>
    <property type="chains" value="A/B/C/D=216-460"/>
</dbReference>
<dbReference type="PDB" id="6S4T">
    <property type="method" value="X-ray"/>
    <property type="resolution" value="2.00 A"/>
    <property type="chains" value="A=216-460"/>
</dbReference>
<dbReference type="PDB" id="6S4U">
    <property type="method" value="X-ray"/>
    <property type="resolution" value="2.81 A"/>
    <property type="chains" value="A/B/C=216-460"/>
</dbReference>
<dbReference type="PDB" id="6S5K">
    <property type="method" value="X-ray"/>
    <property type="resolution" value="1.60 A"/>
    <property type="chains" value="A=216-460"/>
</dbReference>
<dbReference type="PDBsum" id="1P8D"/>
<dbReference type="PDBsum" id="1PQ6"/>
<dbReference type="PDBsum" id="1PQ9"/>
<dbReference type="PDBsum" id="1PQC"/>
<dbReference type="PDBsum" id="1UPV"/>
<dbReference type="PDBsum" id="1UPW"/>
<dbReference type="PDBsum" id="3KFC"/>
<dbReference type="PDBsum" id="3L0E"/>
<dbReference type="PDBsum" id="4DK7"/>
<dbReference type="PDBsum" id="4DK8"/>
<dbReference type="PDBsum" id="4NQA"/>
<dbReference type="PDBsum" id="4RAK"/>
<dbReference type="PDBsum" id="5HJP"/>
<dbReference type="PDBsum" id="5I4V"/>
<dbReference type="PDBsum" id="5JY3"/>
<dbReference type="PDBsum" id="5KYA"/>
<dbReference type="PDBsum" id="5KYJ"/>
<dbReference type="PDBsum" id="6JIO"/>
<dbReference type="PDBsum" id="6K9G"/>
<dbReference type="PDBsum" id="6K9H"/>
<dbReference type="PDBsum" id="6K9M"/>
<dbReference type="PDBsum" id="6S4N"/>
<dbReference type="PDBsum" id="6S4T"/>
<dbReference type="PDBsum" id="6S4U"/>
<dbReference type="PDBsum" id="6S5K"/>
<dbReference type="SMR" id="P55055"/>
<dbReference type="BioGRID" id="113222">
    <property type="interactions" value="67"/>
</dbReference>
<dbReference type="ComplexPortal" id="CPX-652">
    <property type="entry name" value="RXRbeta-LXRbeta nuclear hormone receptor complex"/>
</dbReference>
<dbReference type="ComplexPortal" id="CPX-678">
    <property type="entry name" value="RXRalpha-LXRbeta nuclear hormone receptor complex"/>
</dbReference>
<dbReference type="CORUM" id="P55055"/>
<dbReference type="DIP" id="DIP-53004N"/>
<dbReference type="FunCoup" id="P55055">
    <property type="interactions" value="1342"/>
</dbReference>
<dbReference type="IntAct" id="P55055">
    <property type="interactions" value="43"/>
</dbReference>
<dbReference type="MINT" id="P55055"/>
<dbReference type="STRING" id="9606.ENSP00000499121"/>
<dbReference type="BindingDB" id="P55055"/>
<dbReference type="ChEMBL" id="CHEMBL4093"/>
<dbReference type="DrugBank" id="DB07082">
    <property type="generic name" value="1,1,1,3,3,3-HEXAFLUORO-2-{4-[(2,2,2-TRIFLUOROETHYL)AMINO]PHENYL}PROPAN-2-OL"/>
</dbReference>
<dbReference type="DrugBank" id="DB03848">
    <property type="generic name" value="Benzenesulfinic acid"/>
</dbReference>
<dbReference type="DrugBank" id="DB11994">
    <property type="generic name" value="Diacerein"/>
</dbReference>
<dbReference type="DrugBank" id="DB03791">
    <property type="generic name" value="GW-3965"/>
</dbReference>
<dbReference type="DrugBank" id="DB02325">
    <property type="generic name" value="Isopropyl alcohol"/>
</dbReference>
<dbReference type="DrugBank" id="DB13174">
    <property type="generic name" value="Rhein"/>
</dbReference>
<dbReference type="DrugBank" id="DB07080">
    <property type="generic name" value="TO-901317"/>
</dbReference>
<dbReference type="DrugCentral" id="P55055"/>
<dbReference type="GuidetoPHARMACOLOGY" id="601"/>
<dbReference type="SwissLipids" id="SLP:000001551"/>
<dbReference type="MoonDB" id="P55055">
    <property type="type" value="Predicted"/>
</dbReference>
<dbReference type="GlyGen" id="P55055">
    <property type="glycosylation" value="1 site, 1 O-linked glycan (1 site)"/>
</dbReference>
<dbReference type="iPTMnet" id="P55055"/>
<dbReference type="PhosphoSitePlus" id="P55055"/>
<dbReference type="BioMuta" id="NR1H2"/>
<dbReference type="DMDM" id="296439251"/>
<dbReference type="jPOST" id="P55055"/>
<dbReference type="MassIVE" id="P55055"/>
<dbReference type="PaxDb" id="9606-ENSP00000253727"/>
<dbReference type="PeptideAtlas" id="P55055"/>
<dbReference type="ProteomicsDB" id="18810"/>
<dbReference type="ProteomicsDB" id="56767">
    <molecule id="P55055-1"/>
</dbReference>
<dbReference type="Pumba" id="P55055"/>
<dbReference type="Antibodypedia" id="9326">
    <property type="antibodies" value="402 antibodies from 41 providers"/>
</dbReference>
<dbReference type="DNASU" id="7376"/>
<dbReference type="Ensembl" id="ENST00000253727.10">
    <molecule id="P55055-1"/>
    <property type="protein sequence ID" value="ENSP00000253727.4"/>
    <property type="gene ID" value="ENSG00000131408.15"/>
</dbReference>
<dbReference type="Ensembl" id="ENST00000411902.6">
    <molecule id="P55055-2"/>
    <property type="protein sequence ID" value="ENSP00000396151.2"/>
    <property type="gene ID" value="ENSG00000131408.15"/>
</dbReference>
<dbReference type="Ensembl" id="ENST00000593926.5">
    <molecule id="P55055-1"/>
    <property type="protein sequence ID" value="ENSP00000471194.1"/>
    <property type="gene ID" value="ENSG00000131408.15"/>
</dbReference>
<dbReference type="Ensembl" id="ENST00000652203.1">
    <molecule id="P55055-1"/>
    <property type="protein sequence ID" value="ENSP00000499121.1"/>
    <property type="gene ID" value="ENSG00000131408.15"/>
</dbReference>
<dbReference type="GeneID" id="7376"/>
<dbReference type="KEGG" id="hsa:7376"/>
<dbReference type="MANE-Select" id="ENST00000253727.10">
    <property type="protein sequence ID" value="ENSP00000253727.4"/>
    <property type="RefSeq nucleotide sequence ID" value="NM_007121.7"/>
    <property type="RefSeq protein sequence ID" value="NP_009052.4"/>
</dbReference>
<dbReference type="UCSC" id="uc002psa.6">
    <molecule id="P55055-1"/>
    <property type="organism name" value="human"/>
</dbReference>
<dbReference type="AGR" id="HGNC:7965"/>
<dbReference type="CTD" id="7376"/>
<dbReference type="DisGeNET" id="7376"/>
<dbReference type="GeneCards" id="NR1H2"/>
<dbReference type="HGNC" id="HGNC:7965">
    <property type="gene designation" value="NR1H2"/>
</dbReference>
<dbReference type="HPA" id="ENSG00000131408">
    <property type="expression patterns" value="Low tissue specificity"/>
</dbReference>
<dbReference type="MIM" id="600380">
    <property type="type" value="gene"/>
</dbReference>
<dbReference type="neXtProt" id="NX_P55055"/>
<dbReference type="OpenTargets" id="ENSG00000131408"/>
<dbReference type="PharmGKB" id="PA31750"/>
<dbReference type="VEuPathDB" id="HostDB:ENSG00000131408"/>
<dbReference type="eggNOG" id="KOG3575">
    <property type="taxonomic scope" value="Eukaryota"/>
</dbReference>
<dbReference type="GeneTree" id="ENSGT00940000161465"/>
<dbReference type="HOGENOM" id="CLU_007368_12_4_1"/>
<dbReference type="InParanoid" id="P55055"/>
<dbReference type="OMA" id="DDFHRAX"/>
<dbReference type="OrthoDB" id="5837785at2759"/>
<dbReference type="PAN-GO" id="P55055">
    <property type="GO annotations" value="5 GO annotations based on evolutionary models"/>
</dbReference>
<dbReference type="PhylomeDB" id="P55055"/>
<dbReference type="TreeFam" id="TF352167"/>
<dbReference type="PathwayCommons" id="P55055"/>
<dbReference type="Reactome" id="R-HSA-1989781">
    <property type="pathway name" value="PPARA activates gene expression"/>
</dbReference>
<dbReference type="Reactome" id="R-HSA-383280">
    <property type="pathway name" value="Nuclear Receptor transcription pathway"/>
</dbReference>
<dbReference type="Reactome" id="R-HSA-4090294">
    <property type="pathway name" value="SUMOylation of intracellular receptors"/>
</dbReference>
<dbReference type="Reactome" id="R-HSA-8866427">
    <property type="pathway name" value="VLDLR internalisation and degradation"/>
</dbReference>
<dbReference type="Reactome" id="R-HSA-9029558">
    <property type="pathway name" value="NR1H2 &amp; NR1H3 regulate gene expression linked to lipogenesis"/>
</dbReference>
<dbReference type="Reactome" id="R-HSA-9029569">
    <property type="pathway name" value="NR1H3 &amp; NR1H2 regulate gene expression linked to cholesterol transport and efflux"/>
</dbReference>
<dbReference type="Reactome" id="R-HSA-9031525">
    <property type="pathway name" value="NR1H2 &amp; NR1H3 regulate gene expression to limit cholesterol uptake"/>
</dbReference>
<dbReference type="Reactome" id="R-HSA-9031528">
    <property type="pathway name" value="NR1H2 &amp; NR1H3 regulate gene expression linked to triglyceride lipolysis in adipose"/>
</dbReference>
<dbReference type="Reactome" id="R-HSA-9623433">
    <property type="pathway name" value="NR1H2 &amp; NR1H3 regulate gene expression to control bile acid homeostasis"/>
</dbReference>
<dbReference type="SignaLink" id="P55055"/>
<dbReference type="SIGNOR" id="P55055"/>
<dbReference type="BioGRID-ORCS" id="7376">
    <property type="hits" value="22 hits in 1191 CRISPR screens"/>
</dbReference>
<dbReference type="ChiTaRS" id="NR1H2">
    <property type="organism name" value="human"/>
</dbReference>
<dbReference type="EvolutionaryTrace" id="P55055"/>
<dbReference type="GeneWiki" id="Liver_X_receptor_beta"/>
<dbReference type="GenomeRNAi" id="7376"/>
<dbReference type="Pharos" id="P55055">
    <property type="development level" value="Tchem"/>
</dbReference>
<dbReference type="PRO" id="PR:P55055"/>
<dbReference type="Proteomes" id="UP000005640">
    <property type="component" value="Chromosome 19"/>
</dbReference>
<dbReference type="RNAct" id="P55055">
    <property type="molecule type" value="protein"/>
</dbReference>
<dbReference type="Bgee" id="ENSG00000131408">
    <property type="expression patterns" value="Expressed in popliteal artery and 174 other cell types or tissues"/>
</dbReference>
<dbReference type="ExpressionAtlas" id="P55055">
    <property type="expression patterns" value="baseline and differential"/>
</dbReference>
<dbReference type="GO" id="GO:0000785">
    <property type="term" value="C:chromatin"/>
    <property type="evidence" value="ECO:0000247"/>
    <property type="project" value="NTNU_SB"/>
</dbReference>
<dbReference type="GO" id="GO:0005737">
    <property type="term" value="C:cytoplasm"/>
    <property type="evidence" value="ECO:0000314"/>
    <property type="project" value="HGNC-UCL"/>
</dbReference>
<dbReference type="GO" id="GO:0005829">
    <property type="term" value="C:cytosol"/>
    <property type="evidence" value="ECO:0000304"/>
    <property type="project" value="Reactome"/>
</dbReference>
<dbReference type="GO" id="GO:0005654">
    <property type="term" value="C:nucleoplasm"/>
    <property type="evidence" value="ECO:0000304"/>
    <property type="project" value="Reactome"/>
</dbReference>
<dbReference type="GO" id="GO:0005634">
    <property type="term" value="C:nucleus"/>
    <property type="evidence" value="ECO:0000314"/>
    <property type="project" value="HGNC-UCL"/>
</dbReference>
<dbReference type="GO" id="GO:0090575">
    <property type="term" value="C:RNA polymerase II transcription regulator complex"/>
    <property type="evidence" value="ECO:0000353"/>
    <property type="project" value="ComplexPortal"/>
</dbReference>
<dbReference type="GO" id="GO:0034191">
    <property type="term" value="F:apolipoprotein A-I receptor binding"/>
    <property type="evidence" value="ECO:0000353"/>
    <property type="project" value="BHF-UCL"/>
</dbReference>
<dbReference type="GO" id="GO:0051117">
    <property type="term" value="F:ATPase binding"/>
    <property type="evidence" value="ECO:0000353"/>
    <property type="project" value="BHF-UCL"/>
</dbReference>
<dbReference type="GO" id="GO:0031490">
    <property type="term" value="F:chromatin DNA binding"/>
    <property type="evidence" value="ECO:0007669"/>
    <property type="project" value="Ensembl"/>
</dbReference>
<dbReference type="GO" id="GO:0003677">
    <property type="term" value="F:DNA binding"/>
    <property type="evidence" value="ECO:0000304"/>
    <property type="project" value="ProtInc"/>
</dbReference>
<dbReference type="GO" id="GO:0001228">
    <property type="term" value="F:DNA-binding transcription activator activity, RNA polymerase II-specific"/>
    <property type="evidence" value="ECO:0000314"/>
    <property type="project" value="NTNU_SB"/>
</dbReference>
<dbReference type="GO" id="GO:0000981">
    <property type="term" value="F:DNA-binding transcription factor activity, RNA polymerase II-specific"/>
    <property type="evidence" value="ECO:0000247"/>
    <property type="project" value="NTNU_SB"/>
</dbReference>
<dbReference type="GO" id="GO:0004879">
    <property type="term" value="F:nuclear receptor activity"/>
    <property type="evidence" value="ECO:0000318"/>
    <property type="project" value="GO_Central"/>
</dbReference>
<dbReference type="GO" id="GO:0046965">
    <property type="term" value="F:nuclear retinoid X receptor binding"/>
    <property type="evidence" value="ECO:0007669"/>
    <property type="project" value="Ensembl"/>
</dbReference>
<dbReference type="GO" id="GO:0000978">
    <property type="term" value="F:RNA polymerase II cis-regulatory region sequence-specific DNA binding"/>
    <property type="evidence" value="ECO:0000314"/>
    <property type="project" value="NTNU_SB"/>
</dbReference>
<dbReference type="GO" id="GO:0008270">
    <property type="term" value="F:zinc ion binding"/>
    <property type="evidence" value="ECO:0007669"/>
    <property type="project" value="UniProtKB-KW"/>
</dbReference>
<dbReference type="GO" id="GO:0030154">
    <property type="term" value="P:cell differentiation"/>
    <property type="evidence" value="ECO:0000318"/>
    <property type="project" value="GO_Central"/>
</dbReference>
<dbReference type="GO" id="GO:0042632">
    <property type="term" value="P:cholesterol homeostasis"/>
    <property type="evidence" value="ECO:0000250"/>
    <property type="project" value="UniProtKB"/>
</dbReference>
<dbReference type="GO" id="GO:0009755">
    <property type="term" value="P:hormone-mediated signaling pathway"/>
    <property type="evidence" value="ECO:0000250"/>
    <property type="project" value="ComplexPortal"/>
</dbReference>
<dbReference type="GO" id="GO:0030522">
    <property type="term" value="P:intracellular receptor signaling pathway"/>
    <property type="evidence" value="ECO:0000318"/>
    <property type="project" value="GO_Central"/>
</dbReference>
<dbReference type="GO" id="GO:0042789">
    <property type="term" value="P:mRNA transcription by RNA polymerase II"/>
    <property type="evidence" value="ECO:0000250"/>
    <property type="project" value="ComplexPortal"/>
</dbReference>
<dbReference type="GO" id="GO:0010887">
    <property type="term" value="P:negative regulation of cholesterol storage"/>
    <property type="evidence" value="ECO:0000315"/>
    <property type="project" value="BHF-UCL"/>
</dbReference>
<dbReference type="GO" id="GO:0120163">
    <property type="term" value="P:negative regulation of cold-induced thermogenesis"/>
    <property type="evidence" value="ECO:0000250"/>
    <property type="project" value="YuBioLab"/>
</dbReference>
<dbReference type="GO" id="GO:0045892">
    <property type="term" value="P:negative regulation of DNA-templated transcription"/>
    <property type="evidence" value="ECO:0000314"/>
    <property type="project" value="HGNC-UCL"/>
</dbReference>
<dbReference type="GO" id="GO:0010629">
    <property type="term" value="P:negative regulation of gene expression"/>
    <property type="evidence" value="ECO:0007669"/>
    <property type="project" value="Ensembl"/>
</dbReference>
<dbReference type="GO" id="GO:0050728">
    <property type="term" value="P:negative regulation of inflammatory response"/>
    <property type="evidence" value="ECO:0000318"/>
    <property type="project" value="GO_Central"/>
</dbReference>
<dbReference type="GO" id="GO:0032369">
    <property type="term" value="P:negative regulation of lipid transport"/>
    <property type="evidence" value="ECO:0000315"/>
    <property type="project" value="BHF-UCL"/>
</dbReference>
<dbReference type="GO" id="GO:0010745">
    <property type="term" value="P:negative regulation of macrophage derived foam cell differentiation"/>
    <property type="evidence" value="ECO:0000305"/>
    <property type="project" value="BHF-UCL"/>
</dbReference>
<dbReference type="GO" id="GO:0048550">
    <property type="term" value="P:negative regulation of pinocytosis"/>
    <property type="evidence" value="ECO:0000315"/>
    <property type="project" value="BHF-UCL"/>
</dbReference>
<dbReference type="GO" id="GO:0045861">
    <property type="term" value="P:negative regulation of proteolysis"/>
    <property type="evidence" value="ECO:0007669"/>
    <property type="project" value="Ensembl"/>
</dbReference>
<dbReference type="GO" id="GO:1903573">
    <property type="term" value="P:negative regulation of response to endoplasmic reticulum stress"/>
    <property type="evidence" value="ECO:0000250"/>
    <property type="project" value="UniProtKB"/>
</dbReference>
<dbReference type="GO" id="GO:0000122">
    <property type="term" value="P:negative regulation of transcription by RNA polymerase II"/>
    <property type="evidence" value="ECO:0000318"/>
    <property type="project" value="GO_Central"/>
</dbReference>
<dbReference type="GO" id="GO:0060336">
    <property type="term" value="P:negative regulation of type II interferon-mediated signaling pathway"/>
    <property type="evidence" value="ECO:0000303"/>
    <property type="project" value="BHF-UCL"/>
</dbReference>
<dbReference type="GO" id="GO:0036151">
    <property type="term" value="P:phosphatidylcholine acyl-chain remodeling"/>
    <property type="evidence" value="ECO:0000250"/>
    <property type="project" value="UniProtKB"/>
</dbReference>
<dbReference type="GO" id="GO:0010875">
    <property type="term" value="P:positive regulation of cholesterol efflux"/>
    <property type="evidence" value="ECO:0000315"/>
    <property type="project" value="BHF-UCL"/>
</dbReference>
<dbReference type="GO" id="GO:0032376">
    <property type="term" value="P:positive regulation of cholesterol transport"/>
    <property type="evidence" value="ECO:0000314"/>
    <property type="project" value="BHF-UCL"/>
</dbReference>
<dbReference type="GO" id="GO:0045893">
    <property type="term" value="P:positive regulation of DNA-templated transcription"/>
    <property type="evidence" value="ECO:0000314"/>
    <property type="project" value="UniProtKB"/>
</dbReference>
<dbReference type="GO" id="GO:0045723">
    <property type="term" value="P:positive regulation of fatty acid biosynthetic process"/>
    <property type="evidence" value="ECO:0000315"/>
    <property type="project" value="BHF-UCL"/>
</dbReference>
<dbReference type="GO" id="GO:0010628">
    <property type="term" value="P:positive regulation of gene expression"/>
    <property type="evidence" value="ECO:0007669"/>
    <property type="project" value="Ensembl"/>
</dbReference>
<dbReference type="GO" id="GO:0090108">
    <property type="term" value="P:positive regulation of high-density lipoprotein particle assembly"/>
    <property type="evidence" value="ECO:0007669"/>
    <property type="project" value="Ensembl"/>
</dbReference>
<dbReference type="GO" id="GO:0010884">
    <property type="term" value="P:positive regulation of lipid storage"/>
    <property type="evidence" value="ECO:0007669"/>
    <property type="project" value="Ensembl"/>
</dbReference>
<dbReference type="GO" id="GO:1902895">
    <property type="term" value="P:positive regulation of miRNA transcription"/>
    <property type="evidence" value="ECO:0007669"/>
    <property type="project" value="Ensembl"/>
</dbReference>
<dbReference type="GO" id="GO:0090187">
    <property type="term" value="P:positive regulation of pancreatic juice secretion"/>
    <property type="evidence" value="ECO:0007669"/>
    <property type="project" value="Ensembl"/>
</dbReference>
<dbReference type="GO" id="GO:0090340">
    <property type="term" value="P:positive regulation of secretion of lysosomal enzymes"/>
    <property type="evidence" value="ECO:0007669"/>
    <property type="project" value="Ensembl"/>
</dbReference>
<dbReference type="GO" id="GO:0045944">
    <property type="term" value="P:positive regulation of transcription by RNA polymerase II"/>
    <property type="evidence" value="ECO:0000314"/>
    <property type="project" value="UniProtKB"/>
</dbReference>
<dbReference type="GO" id="GO:0010867">
    <property type="term" value="P:positive regulation of triglyceride biosynthetic process"/>
    <property type="evidence" value="ECO:0000315"/>
    <property type="project" value="BHF-UCL"/>
</dbReference>
<dbReference type="GO" id="GO:0010883">
    <property type="term" value="P:regulation of lipid storage"/>
    <property type="evidence" value="ECO:0000318"/>
    <property type="project" value="GO_Central"/>
</dbReference>
<dbReference type="GO" id="GO:0031667">
    <property type="term" value="P:response to nutrient levels"/>
    <property type="evidence" value="ECO:0007669"/>
    <property type="project" value="Ensembl"/>
</dbReference>
<dbReference type="GO" id="GO:0048384">
    <property type="term" value="P:retinoic acid receptor signaling pathway"/>
    <property type="evidence" value="ECO:0007669"/>
    <property type="project" value="Ensembl"/>
</dbReference>
<dbReference type="CDD" id="cd07160">
    <property type="entry name" value="NR_DBD_LXR"/>
    <property type="match status" value="1"/>
</dbReference>
<dbReference type="CDD" id="cd06954">
    <property type="entry name" value="NR_LBD_LXR"/>
    <property type="match status" value="1"/>
</dbReference>
<dbReference type="FunFam" id="1.10.565.10:FF:000014">
    <property type="entry name" value="Oxysterols receptor LXR-alpha isoform 1"/>
    <property type="match status" value="1"/>
</dbReference>
<dbReference type="FunFam" id="3.30.50.10:FF:000017">
    <property type="entry name" value="Oxysterols receptor LXR-alpha isoform 1"/>
    <property type="match status" value="1"/>
</dbReference>
<dbReference type="Gene3D" id="3.30.50.10">
    <property type="entry name" value="Erythroid Transcription Factor GATA-1, subunit A"/>
    <property type="match status" value="1"/>
</dbReference>
<dbReference type="Gene3D" id="1.10.565.10">
    <property type="entry name" value="Retinoid X Receptor"/>
    <property type="match status" value="1"/>
</dbReference>
<dbReference type="IDEAL" id="IID00373"/>
<dbReference type="InterPro" id="IPR023257">
    <property type="entry name" value="Liver_X_rcpt"/>
</dbReference>
<dbReference type="InterPro" id="IPR035500">
    <property type="entry name" value="NHR-like_dom_sf"/>
</dbReference>
<dbReference type="InterPro" id="IPR000536">
    <property type="entry name" value="Nucl_hrmn_rcpt_lig-bd"/>
</dbReference>
<dbReference type="InterPro" id="IPR050234">
    <property type="entry name" value="Nuclear_hormone_rcpt_NR1"/>
</dbReference>
<dbReference type="InterPro" id="IPR001723">
    <property type="entry name" value="Nuclear_hrmn_rcpt"/>
</dbReference>
<dbReference type="InterPro" id="IPR001628">
    <property type="entry name" value="Znf_hrmn_rcpt"/>
</dbReference>
<dbReference type="InterPro" id="IPR013088">
    <property type="entry name" value="Znf_NHR/GATA"/>
</dbReference>
<dbReference type="PANTHER" id="PTHR24082">
    <property type="entry name" value="NUCLEAR HORMONE RECEPTOR"/>
    <property type="match status" value="1"/>
</dbReference>
<dbReference type="PANTHER" id="PTHR24082:SF316">
    <property type="entry name" value="OXYSTEROLS RECEPTOR LXR-BETA"/>
    <property type="match status" value="1"/>
</dbReference>
<dbReference type="Pfam" id="PF00104">
    <property type="entry name" value="Hormone_recep"/>
    <property type="match status" value="1"/>
</dbReference>
<dbReference type="Pfam" id="PF00105">
    <property type="entry name" value="zf-C4"/>
    <property type="match status" value="1"/>
</dbReference>
<dbReference type="PRINTS" id="PR02034">
    <property type="entry name" value="LIVERXRECPTR"/>
</dbReference>
<dbReference type="PRINTS" id="PR00398">
    <property type="entry name" value="STRDHORMONER"/>
</dbReference>
<dbReference type="PRINTS" id="PR00047">
    <property type="entry name" value="STROIDFINGER"/>
</dbReference>
<dbReference type="SMART" id="SM00430">
    <property type="entry name" value="HOLI"/>
    <property type="match status" value="1"/>
</dbReference>
<dbReference type="SMART" id="SM00399">
    <property type="entry name" value="ZnF_C4"/>
    <property type="match status" value="1"/>
</dbReference>
<dbReference type="SUPFAM" id="SSF57716">
    <property type="entry name" value="Glucocorticoid receptor-like (DNA-binding domain)"/>
    <property type="match status" value="1"/>
</dbReference>
<dbReference type="SUPFAM" id="SSF48508">
    <property type="entry name" value="Nuclear receptor ligand-binding domain"/>
    <property type="match status" value="1"/>
</dbReference>
<dbReference type="PROSITE" id="PS51843">
    <property type="entry name" value="NR_LBD"/>
    <property type="match status" value="1"/>
</dbReference>
<dbReference type="PROSITE" id="PS00031">
    <property type="entry name" value="NUCLEAR_REC_DBD_1"/>
    <property type="match status" value="1"/>
</dbReference>
<dbReference type="PROSITE" id="PS51030">
    <property type="entry name" value="NUCLEAR_REC_DBD_2"/>
    <property type="match status" value="1"/>
</dbReference>
<gene>
    <name type="primary">NR1H2</name>
    <name type="synonym">LXRB</name>
    <name type="synonym">NER</name>
    <name type="synonym">UNR</name>
</gene>
<proteinExistence type="evidence at protein level"/>
<feature type="chain" id="PRO_0000053532" description="Oxysterols receptor LXR-beta">
    <location>
        <begin position="1"/>
        <end position="460"/>
    </location>
</feature>
<feature type="domain" description="NR LBD" evidence="3">
    <location>
        <begin position="222"/>
        <end position="460"/>
    </location>
</feature>
<feature type="DNA-binding region" description="Nuclear receptor" evidence="2">
    <location>
        <begin position="84"/>
        <end position="161"/>
    </location>
</feature>
<feature type="zinc finger region" description="NR C4-type" evidence="2">
    <location>
        <begin position="87"/>
        <end position="107"/>
    </location>
</feature>
<feature type="zinc finger region" description="NR C4-type" evidence="2">
    <location>
        <begin position="125"/>
        <end position="149"/>
    </location>
</feature>
<feature type="region of interest" description="Transactivation AF-1; required for ligand-independent transactivation function" evidence="8">
    <location>
        <begin position="1"/>
        <end position="85"/>
    </location>
</feature>
<feature type="region of interest" description="Disordered" evidence="4">
    <location>
        <begin position="1"/>
        <end position="78"/>
    </location>
</feature>
<feature type="region of interest" description="Disordered" evidence="4">
    <location>
        <begin position="169"/>
        <end position="216"/>
    </location>
</feature>
<feature type="region of interest" description="Transactivation AF-2; required for ligand-dependent transactivation function; mediates interaction with CCAR2" evidence="8">
    <location>
        <begin position="219"/>
        <end position="460"/>
    </location>
</feature>
<feature type="compositionally biased region" description="Low complexity" evidence="4">
    <location>
        <begin position="1"/>
        <end position="14"/>
    </location>
</feature>
<feature type="compositionally biased region" description="Pro residues" evidence="4">
    <location>
        <begin position="36"/>
        <end position="45"/>
    </location>
</feature>
<feature type="compositionally biased region" description="Low complexity" evidence="4">
    <location>
        <begin position="175"/>
        <end position="198"/>
    </location>
</feature>
<feature type="compositionally biased region" description="Gly residues" evidence="4">
    <location>
        <begin position="199"/>
        <end position="215"/>
    </location>
</feature>
<feature type="cross-link" description="Glycyl lysine isopeptide (Lys-Gly) (interchain with G-Cter in SUMO2)" evidence="6">
    <location>
        <position position="409"/>
    </location>
</feature>
<feature type="cross-link" description="Glycyl lysine isopeptide (Lys-Gly) (interchain with G-Cter in SUMO2)" evidence="6">
    <location>
        <position position="447"/>
    </location>
</feature>
<feature type="splice variant" id="VSP_053789" description="In isoform 2." evidence="9">
    <original>VIPDPEEEPERKRKKGPAPKMLGHELCRVCGDKASGFHYNVLSCEGCKGFFRRSVVRGGARRYACRGGGTCQMDAFMRRKCQQCRLRKCKEAGMREQC</original>
    <variation>G</variation>
    <location>
        <begin position="61"/>
        <end position="158"/>
    </location>
</feature>
<feature type="sequence variant" id="VAR_050579" description="In dbSNP:rs41379547.">
    <original>S</original>
    <variation>F</variation>
    <location>
        <position position="2"/>
    </location>
</feature>
<feature type="mutagenesis site" description="Impaired ability to act as an anti-inflammatory role during the hepatic acute phase response; when associated with R-447." evidence="6">
    <original>K</original>
    <variation>R</variation>
    <location>
        <position position="409"/>
    </location>
</feature>
<feature type="mutagenesis site" description="Impaired ability to act as an anti-inflammatory role during the hepatic acute phase response; when associated with R-409." evidence="6">
    <original>K</original>
    <variation>R</variation>
    <location>
        <position position="447"/>
    </location>
</feature>
<feature type="sequence conflict" description="In Ref. 1; AAA61783, 2; BAF83544/BAG60288, 4; AAH07790/AAH33500/AAH47750/AAH74500 and 5; AAA58594." evidence="10" ref="1 2 4 5">
    <original>Q</original>
    <variation>QQ</variation>
    <location>
        <position position="175"/>
    </location>
</feature>
<feature type="sequence conflict" description="In Ref. 2; BAG60288." evidence="10" ref="2">
    <original>D</original>
    <variation>G</variation>
    <location>
        <position position="244"/>
    </location>
</feature>
<feature type="strand" evidence="11">
    <location>
        <begin position="88"/>
        <end position="90"/>
    </location>
</feature>
<feature type="strand" evidence="11">
    <location>
        <begin position="99"/>
        <end position="103"/>
    </location>
</feature>
<feature type="helix" evidence="11">
    <location>
        <begin position="105"/>
        <end position="116"/>
    </location>
</feature>
<feature type="helix" evidence="11">
    <location>
        <begin position="137"/>
        <end position="139"/>
    </location>
</feature>
<feature type="helix" evidence="11">
    <location>
        <begin position="142"/>
        <end position="151"/>
    </location>
</feature>
<feature type="helix" evidence="11">
    <location>
        <begin position="162"/>
        <end position="165"/>
    </location>
</feature>
<feature type="turn" evidence="11">
    <location>
        <begin position="167"/>
        <end position="169"/>
    </location>
</feature>
<feature type="helix" evidence="11">
    <location>
        <begin position="170"/>
        <end position="173"/>
    </location>
</feature>
<feature type="turn" evidence="11">
    <location>
        <begin position="176"/>
        <end position="178"/>
    </location>
</feature>
<feature type="strand" evidence="11">
    <location>
        <begin position="183"/>
        <end position="185"/>
    </location>
</feature>
<feature type="strand" evidence="11">
    <location>
        <begin position="212"/>
        <end position="214"/>
    </location>
</feature>
<feature type="helix" evidence="14">
    <location>
        <begin position="221"/>
        <end position="242"/>
    </location>
</feature>
<feature type="helix" evidence="13">
    <location>
        <begin position="245"/>
        <end position="247"/>
    </location>
</feature>
<feature type="helix" evidence="14">
    <location>
        <begin position="263"/>
        <end position="286"/>
    </location>
</feature>
<feature type="helix" evidence="14">
    <location>
        <begin position="291"/>
        <end position="293"/>
    </location>
</feature>
<feature type="helix" evidence="14">
    <location>
        <begin position="296"/>
        <end position="317"/>
    </location>
</feature>
<feature type="strand" evidence="11">
    <location>
        <begin position="318"/>
        <end position="320"/>
    </location>
</feature>
<feature type="turn" evidence="14">
    <location>
        <begin position="321"/>
        <end position="324"/>
    </location>
</feature>
<feature type="strand" evidence="14">
    <location>
        <begin position="325"/>
        <end position="331"/>
    </location>
</feature>
<feature type="strand" evidence="13">
    <location>
        <begin position="332"/>
        <end position="334"/>
    </location>
</feature>
<feature type="helix" evidence="14">
    <location>
        <begin position="336"/>
        <end position="341"/>
    </location>
</feature>
<feature type="helix" evidence="14">
    <location>
        <begin position="346"/>
        <end position="362"/>
    </location>
</feature>
<feature type="helix" evidence="14">
    <location>
        <begin position="366"/>
        <end position="377"/>
    </location>
</feature>
<feature type="helix" evidence="14">
    <location>
        <begin position="388"/>
        <end position="409"/>
    </location>
</feature>
<feature type="turn" evidence="12">
    <location>
        <begin position="411"/>
        <end position="413"/>
    </location>
</feature>
<feature type="helix" evidence="14">
    <location>
        <begin position="416"/>
        <end position="440"/>
    </location>
</feature>
<feature type="turn" evidence="14">
    <location>
        <begin position="441"/>
        <end position="445"/>
    </location>
</feature>
<feature type="helix" evidence="14">
    <location>
        <begin position="450"/>
        <end position="456"/>
    </location>
</feature>
<sequence>MSSPTTSSLDTPLPGNGPPQPGAPSSSPTVKEEGPEPWPGGPDPDVPGTDEASSACSTDWVIPDPEEEPERKRKKGPAPKMLGHELCRVCGDKASGFHYNVLSCEGCKGFFRRSVVRGGARRYACRGGGTCQMDAFMRRKCQQCRLRKCKEAGMREQCVLSEEQIRKKKIRKQQQESQSQSQSPVGPQGSSSSASGPGASPGGSEAGSQGSGEGEGVQLTAAQELMIQQLVAAQLQCNKRSFSDQPKVTPWPLGADPQSRDARQQRFAHFTELAIISVQEIVDFAKQVPGFLQLGREDQIALLKASTIEIMLLETARRYNHETECITFLKDFTYSKDDFHRAGLQVEFINPIFEFSRAMRRLGLDDAEYALLIAINIFSADRPNVQEPGRVEALQQPYVEALLSYTRIKRPQDQLRFPRMLMKLVSLRTLSSVHSEQVFALRLQDKKLPPLLSEIWDVHE</sequence>
<organism>
    <name type="scientific">Homo sapiens</name>
    <name type="common">Human</name>
    <dbReference type="NCBI Taxonomy" id="9606"/>
    <lineage>
        <taxon>Eukaryota</taxon>
        <taxon>Metazoa</taxon>
        <taxon>Chordata</taxon>
        <taxon>Craniata</taxon>
        <taxon>Vertebrata</taxon>
        <taxon>Euteleostomi</taxon>
        <taxon>Mammalia</taxon>
        <taxon>Eutheria</taxon>
        <taxon>Euarchontoglires</taxon>
        <taxon>Primates</taxon>
        <taxon>Haplorrhini</taxon>
        <taxon>Catarrhini</taxon>
        <taxon>Hominidae</taxon>
        <taxon>Homo</taxon>
    </lineage>
</organism>
<reference key="1">
    <citation type="journal article" date="1994" name="Gene">
        <title>NER, a new member of the gene family encoding the human steroid hormone nuclear receptor.</title>
        <authorList>
            <person name="Shinar D.M."/>
            <person name="Endo N."/>
            <person name="Rutledge S.J."/>
            <person name="Vogel R."/>
            <person name="Rodan G.A."/>
            <person name="Schmidt A."/>
        </authorList>
    </citation>
    <scope>NUCLEOTIDE SEQUENCE [MRNA] (ISOFORM 1)</scope>
    <source>
        <tissue>Osteosarcoma</tissue>
        <tissue>Skin</tissue>
    </source>
</reference>
<reference key="2">
    <citation type="journal article" date="2004" name="Nat. Genet.">
        <title>Complete sequencing and characterization of 21,243 full-length human cDNAs.</title>
        <authorList>
            <person name="Ota T."/>
            <person name="Suzuki Y."/>
            <person name="Nishikawa T."/>
            <person name="Otsuki T."/>
            <person name="Sugiyama T."/>
            <person name="Irie R."/>
            <person name="Wakamatsu A."/>
            <person name="Hayashi K."/>
            <person name="Sato H."/>
            <person name="Nagai K."/>
            <person name="Kimura K."/>
            <person name="Makita H."/>
            <person name="Sekine M."/>
            <person name="Obayashi M."/>
            <person name="Nishi T."/>
            <person name="Shibahara T."/>
            <person name="Tanaka T."/>
            <person name="Ishii S."/>
            <person name="Yamamoto J."/>
            <person name="Saito K."/>
            <person name="Kawai Y."/>
            <person name="Isono Y."/>
            <person name="Nakamura Y."/>
            <person name="Nagahari K."/>
            <person name="Murakami K."/>
            <person name="Yasuda T."/>
            <person name="Iwayanagi T."/>
            <person name="Wagatsuma M."/>
            <person name="Shiratori A."/>
            <person name="Sudo H."/>
            <person name="Hosoiri T."/>
            <person name="Kaku Y."/>
            <person name="Kodaira H."/>
            <person name="Kondo H."/>
            <person name="Sugawara M."/>
            <person name="Takahashi M."/>
            <person name="Kanda K."/>
            <person name="Yokoi T."/>
            <person name="Furuya T."/>
            <person name="Kikkawa E."/>
            <person name="Omura Y."/>
            <person name="Abe K."/>
            <person name="Kamihara K."/>
            <person name="Katsuta N."/>
            <person name="Sato K."/>
            <person name="Tanikawa M."/>
            <person name="Yamazaki M."/>
            <person name="Ninomiya K."/>
            <person name="Ishibashi T."/>
            <person name="Yamashita H."/>
            <person name="Murakawa K."/>
            <person name="Fujimori K."/>
            <person name="Tanai H."/>
            <person name="Kimata M."/>
            <person name="Watanabe M."/>
            <person name="Hiraoka S."/>
            <person name="Chiba Y."/>
            <person name="Ishida S."/>
            <person name="Ono Y."/>
            <person name="Takiguchi S."/>
            <person name="Watanabe S."/>
            <person name="Yosida M."/>
            <person name="Hotuta T."/>
            <person name="Kusano J."/>
            <person name="Kanehori K."/>
            <person name="Takahashi-Fujii A."/>
            <person name="Hara H."/>
            <person name="Tanase T.-O."/>
            <person name="Nomura Y."/>
            <person name="Togiya S."/>
            <person name="Komai F."/>
            <person name="Hara R."/>
            <person name="Takeuchi K."/>
            <person name="Arita M."/>
            <person name="Imose N."/>
            <person name="Musashino K."/>
            <person name="Yuuki H."/>
            <person name="Oshima A."/>
            <person name="Sasaki N."/>
            <person name="Aotsuka S."/>
            <person name="Yoshikawa Y."/>
            <person name="Matsunawa H."/>
            <person name="Ichihara T."/>
            <person name="Shiohata N."/>
            <person name="Sano S."/>
            <person name="Moriya S."/>
            <person name="Momiyama H."/>
            <person name="Satoh N."/>
            <person name="Takami S."/>
            <person name="Terashima Y."/>
            <person name="Suzuki O."/>
            <person name="Nakagawa S."/>
            <person name="Senoh A."/>
            <person name="Mizoguchi H."/>
            <person name="Goto Y."/>
            <person name="Shimizu F."/>
            <person name="Wakebe H."/>
            <person name="Hishigaki H."/>
            <person name="Watanabe T."/>
            <person name="Sugiyama A."/>
            <person name="Takemoto M."/>
            <person name="Kawakami B."/>
            <person name="Yamazaki M."/>
            <person name="Watanabe K."/>
            <person name="Kumagai A."/>
            <person name="Itakura S."/>
            <person name="Fukuzumi Y."/>
            <person name="Fujimori Y."/>
            <person name="Komiyama M."/>
            <person name="Tashiro H."/>
            <person name="Tanigami A."/>
            <person name="Fujiwara T."/>
            <person name="Ono T."/>
            <person name="Yamada K."/>
            <person name="Fujii Y."/>
            <person name="Ozaki K."/>
            <person name="Hirao M."/>
            <person name="Ohmori Y."/>
            <person name="Kawabata A."/>
            <person name="Hikiji T."/>
            <person name="Kobatake N."/>
            <person name="Inagaki H."/>
            <person name="Ikema Y."/>
            <person name="Okamoto S."/>
            <person name="Okitani R."/>
            <person name="Kawakami T."/>
            <person name="Noguchi S."/>
            <person name="Itoh T."/>
            <person name="Shigeta K."/>
            <person name="Senba T."/>
            <person name="Matsumura K."/>
            <person name="Nakajima Y."/>
            <person name="Mizuno T."/>
            <person name="Morinaga M."/>
            <person name="Sasaki M."/>
            <person name="Togashi T."/>
            <person name="Oyama M."/>
            <person name="Hata H."/>
            <person name="Watanabe M."/>
            <person name="Komatsu T."/>
            <person name="Mizushima-Sugano J."/>
            <person name="Satoh T."/>
            <person name="Shirai Y."/>
            <person name="Takahashi Y."/>
            <person name="Nakagawa K."/>
            <person name="Okumura K."/>
            <person name="Nagase T."/>
            <person name="Nomura N."/>
            <person name="Kikuchi H."/>
            <person name="Masuho Y."/>
            <person name="Yamashita R."/>
            <person name="Nakai K."/>
            <person name="Yada T."/>
            <person name="Nakamura Y."/>
            <person name="Ohara O."/>
            <person name="Isogai T."/>
            <person name="Sugano S."/>
        </authorList>
    </citation>
    <scope>NUCLEOTIDE SEQUENCE [LARGE SCALE MRNA] (ISOFORMS 1 AND 2)</scope>
    <source>
        <tissue>Mammary gland</tissue>
    </source>
</reference>
<reference key="3">
    <citation type="journal article" date="2004" name="Nature">
        <title>The DNA sequence and biology of human chromosome 19.</title>
        <authorList>
            <person name="Grimwood J."/>
            <person name="Gordon L.A."/>
            <person name="Olsen A.S."/>
            <person name="Terry A."/>
            <person name="Schmutz J."/>
            <person name="Lamerdin J.E."/>
            <person name="Hellsten U."/>
            <person name="Goodstein D."/>
            <person name="Couronne O."/>
            <person name="Tran-Gyamfi M."/>
            <person name="Aerts A."/>
            <person name="Altherr M."/>
            <person name="Ashworth L."/>
            <person name="Bajorek E."/>
            <person name="Black S."/>
            <person name="Branscomb E."/>
            <person name="Caenepeel S."/>
            <person name="Carrano A.V."/>
            <person name="Caoile C."/>
            <person name="Chan Y.M."/>
            <person name="Christensen M."/>
            <person name="Cleland C.A."/>
            <person name="Copeland A."/>
            <person name="Dalin E."/>
            <person name="Dehal P."/>
            <person name="Denys M."/>
            <person name="Detter J.C."/>
            <person name="Escobar J."/>
            <person name="Flowers D."/>
            <person name="Fotopulos D."/>
            <person name="Garcia C."/>
            <person name="Georgescu A.M."/>
            <person name="Glavina T."/>
            <person name="Gomez M."/>
            <person name="Gonzales E."/>
            <person name="Groza M."/>
            <person name="Hammon N."/>
            <person name="Hawkins T."/>
            <person name="Haydu L."/>
            <person name="Ho I."/>
            <person name="Huang W."/>
            <person name="Israni S."/>
            <person name="Jett J."/>
            <person name="Kadner K."/>
            <person name="Kimball H."/>
            <person name="Kobayashi A."/>
            <person name="Larionov V."/>
            <person name="Leem S.-H."/>
            <person name="Lopez F."/>
            <person name="Lou Y."/>
            <person name="Lowry S."/>
            <person name="Malfatti S."/>
            <person name="Martinez D."/>
            <person name="McCready P.M."/>
            <person name="Medina C."/>
            <person name="Morgan J."/>
            <person name="Nelson K."/>
            <person name="Nolan M."/>
            <person name="Ovcharenko I."/>
            <person name="Pitluck S."/>
            <person name="Pollard M."/>
            <person name="Popkie A.P."/>
            <person name="Predki P."/>
            <person name="Quan G."/>
            <person name="Ramirez L."/>
            <person name="Rash S."/>
            <person name="Retterer J."/>
            <person name="Rodriguez A."/>
            <person name="Rogers S."/>
            <person name="Salamov A."/>
            <person name="Salazar A."/>
            <person name="She X."/>
            <person name="Smith D."/>
            <person name="Slezak T."/>
            <person name="Solovyev V."/>
            <person name="Thayer N."/>
            <person name="Tice H."/>
            <person name="Tsai M."/>
            <person name="Ustaszewska A."/>
            <person name="Vo N."/>
            <person name="Wagner M."/>
            <person name="Wheeler J."/>
            <person name="Wu K."/>
            <person name="Xie G."/>
            <person name="Yang J."/>
            <person name="Dubchak I."/>
            <person name="Furey T.S."/>
            <person name="DeJong P."/>
            <person name="Dickson M."/>
            <person name="Gordon D."/>
            <person name="Eichler E.E."/>
            <person name="Pennacchio L.A."/>
            <person name="Richardson P."/>
            <person name="Stubbs L."/>
            <person name="Rokhsar D.S."/>
            <person name="Myers R.M."/>
            <person name="Rubin E.M."/>
            <person name="Lucas S.M."/>
        </authorList>
    </citation>
    <scope>NUCLEOTIDE SEQUENCE [LARGE SCALE GENOMIC DNA]</scope>
</reference>
<reference key="4">
    <citation type="journal article" date="2004" name="Genome Res.">
        <title>The status, quality, and expansion of the NIH full-length cDNA project: the Mammalian Gene Collection (MGC).</title>
        <authorList>
            <consortium name="The MGC Project Team"/>
        </authorList>
    </citation>
    <scope>NUCLEOTIDE SEQUENCE [LARGE SCALE MRNA] (ISOFORM 1)</scope>
    <source>
        <tissue>Blood</tissue>
        <tissue>Brain</tissue>
        <tissue>Placenta</tissue>
        <tissue>Uterus</tissue>
    </source>
</reference>
<reference key="5">
    <citation type="submission" date="1994-09" db="EMBL/GenBank/DDBJ databases">
        <title>Ubiquitous receptor: a novel receptor that modulates gene activation by retinoic acid and thyroid hormone receptors.</title>
        <authorList>
            <person name="Song C."/>
            <person name="Konkontis J.M."/>
            <person name="Hiipakka R.A."/>
            <person name="Liao S."/>
        </authorList>
    </citation>
    <scope>NUCLEOTIDE SEQUENCE [MRNA] OF 7-460 (ISOFORM 1)</scope>
</reference>
<reference key="6">
    <citation type="journal article" date="2010" name="Genes Dev.">
        <title>GPS2-dependent corepressor/SUMO pathways govern anti-inflammatory actions of LRH-1 and LXRbeta in the hepatic acute phase response.</title>
        <authorList>
            <person name="Venteclef N."/>
            <person name="Jakobsson T."/>
            <person name="Ehrlund A."/>
            <person name="Damdimopoulos A."/>
            <person name="Mikkonen L."/>
            <person name="Ellis E."/>
            <person name="Nilsson L.M."/>
            <person name="Parini P."/>
            <person name="Jaenne O.A."/>
            <person name="Gustafsson J.A."/>
            <person name="Steffensen K.R."/>
            <person name="Treuter E."/>
        </authorList>
    </citation>
    <scope>FUNCTION</scope>
    <scope>INTERACTION WITH GPS2</scope>
    <scope>SUMOYLATION AT LYS-409 AND LYS-447</scope>
    <scope>MUTAGENESIS OF LYS-409 AND LYS-447</scope>
</reference>
<reference key="7">
    <citation type="journal article" date="2013" name="Cell Metab.">
        <title>ABCA12 regulates ABCA1-dependent cholesterol efflux from macrophages and the development of atherosclerosis.</title>
        <authorList>
            <person name="Fu Y."/>
            <person name="Mukhamedova N."/>
            <person name="Ip S."/>
            <person name="D'Souza W."/>
            <person name="Henley K.J."/>
            <person name="DiTommaso T."/>
            <person name="Kesani R."/>
            <person name="Ditiatkovski M."/>
            <person name="Jones L."/>
            <person name="Lane R.M."/>
            <person name="Jennings G."/>
            <person name="Smyth I.M."/>
            <person name="Kile B.T."/>
            <person name="Sviridov D."/>
        </authorList>
    </citation>
    <scope>INTERACTION WITH ABCA12 AND NR1H2</scope>
</reference>
<reference key="8">
    <citation type="journal article" date="2015" name="J. Steroid Biochem. Mol. Biol.">
        <title>CCAR2 negatively regulates nuclear receptor LXRalpha by competing with SIRT1 deacetylase.</title>
        <authorList>
            <person name="Sakurabashi A."/>
            <person name="Wada-Hiraike O."/>
            <person name="Hirano M."/>
            <person name="Fu H."/>
            <person name="Isono W."/>
            <person name="Fukuda T."/>
            <person name="Morita Y."/>
            <person name="Tanikawa M."/>
            <person name="Miyamoto Y."/>
            <person name="Oda K."/>
            <person name="Kawana K."/>
            <person name="Osuga Y."/>
            <person name="Fujii T."/>
        </authorList>
    </citation>
    <scope>FUNCTION</scope>
    <scope>INTERACTION WITH CCAR2</scope>
</reference>
<reference key="9">
    <citation type="journal article" date="2003" name="J. Biol. Chem.">
        <title>The three-dimensional structure of the liver X receptor beta reveals a flexible ligand-binding pocket that can accommodate fundamentally different ligands.</title>
        <authorList>
            <person name="Farnegardh M."/>
            <person name="Bonn T."/>
            <person name="Sun S."/>
            <person name="Ljunggren J."/>
            <person name="Ahola H."/>
            <person name="Wilhelmsson A."/>
            <person name="Gustafsson J.-A."/>
            <person name="Carlquist M."/>
        </authorList>
    </citation>
    <scope>X-RAY CRYSTALLOGRAPHY (2.1 ANGSTROMS) OF 208-460 IN COMPLEX WITH SYNTHETIC LIGANDS</scope>
</reference>
<comment type="function">
    <text evidence="1 6 8">Nuclear receptor that exhibits a ligand-dependent transcriptional activation activity (PubMed:25661920). Binds preferentially to double-stranded oligonucleotide direct repeats having the consensus half-site sequence 5'-AGGTCA-3' and 4-nt spacing (DR-4). Regulates cholesterol uptake through MYLIP-dependent ubiquitination of LDLR, VLDLR and LRP8; DLDLR and LRP8. Interplays functionally with RORA for the regulation of genes involved in liver metabolism (By similarity). Induces LPCAT3-dependent phospholipid remodeling in endoplasmic reticulum (ER) membranes of hepatocytes, driving SREBF1 processing and lipogenesis (By similarity). Via LPCAT3, triggers the incorporation of arachidonate into phosphatidylcholines of ER membranes, increasing membrane dynamics and enabling triacylglycerols transfer to nascent very low-density lipoprotein (VLDL) particles (By similarity). Via LPCAT3 also counteracts lipid-induced ER stress response and inflammation, likely by modulating SRC kinase membrane compartmentalization and limiting the synthesis of lipid inflammatory mediators (By similarity). Plays an anti-inflammatory role during the hepatic acute phase response by acting as a corepressor: inhibits the hepatic acute phase response by preventing dissociation of the N-Cor corepressor complex (PubMed:20159957).</text>
</comment>
<comment type="subunit">
    <text evidence="5 6 7 8">Forms a heterodimer with RXR. Interacts with CCAR2 (via N-terminus) in a ligand-independent manner (PubMed:25661920). Interacts (when sumoylated) with GPS2; interaction with GPS2 onto hepatic acute phase protein promoters prevents N-Cor corepressor complex dissociation (PubMed:20159957). Interacts with ABCA12 and ABCA1; this interaction is required for ABCA1 localization to the cell surface and is necessary for its normal activity and stability (PubMed:23931754).</text>
</comment>
<comment type="interaction">
    <interactant intactId="EBI-745354">
        <id>P55055</id>
    </interactant>
    <interactant intactId="EBI-2835660">
        <id>Q92828</id>
        <label>CORO2A</label>
    </interactant>
    <organismsDiffer>false</organismsDiffer>
    <experiments>4</experiments>
</comment>
<comment type="interaction">
    <interactant intactId="EBI-745354">
        <id>P55055</id>
    </interactant>
    <interactant intactId="EBI-724076">
        <id>Q99750</id>
        <label>MDFI</label>
    </interactant>
    <organismsDiffer>false</organismsDiffer>
    <experiments>3</experiments>
</comment>
<comment type="interaction">
    <interactant intactId="EBI-745354">
        <id>P55055</id>
    </interactant>
    <interactant intactId="EBI-347233">
        <id>O75376</id>
        <label>NCOR1</label>
    </interactant>
    <organismsDiffer>false</organismsDiffer>
    <experiments>6</experiments>
</comment>
<comment type="interaction">
    <interactant intactId="EBI-745354">
        <id>P55055</id>
    </interactant>
    <interactant intactId="EBI-78598">
        <id>P19793</id>
        <label>RXRA</label>
    </interactant>
    <organismsDiffer>false</organismsDiffer>
    <experiments>3</experiments>
</comment>
<comment type="interaction">
    <interactant intactId="EBI-745354">
        <id>P55055</id>
    </interactant>
    <interactant intactId="EBI-712405">
        <id>P48443</id>
        <label>RXRG</label>
    </interactant>
    <organismsDiffer>false</organismsDiffer>
    <experiments>6</experiments>
</comment>
<comment type="interaction">
    <interactant intactId="EBI-21458417">
        <id>P55055-1</id>
    </interactant>
    <interactant intactId="EBI-21458428">
        <id>Q07869-1</id>
        <label>PPARA</label>
    </interactant>
    <organismsDiffer>false</organismsDiffer>
    <experiments>2</experiments>
</comment>
<comment type="interaction">
    <interactant intactId="EBI-21458417">
        <id>P55055-1</id>
    </interactant>
    <interactant intactId="EBI-6426768">
        <id>Q03181</id>
        <label>PPARD</label>
    </interactant>
    <organismsDiffer>false</organismsDiffer>
    <experiments>2</experiments>
</comment>
<comment type="interaction">
    <interactant intactId="EBI-21458417">
        <id>P55055-1</id>
    </interactant>
    <interactant intactId="EBI-781384">
        <id>P37231</id>
        <label>PPARG</label>
    </interactant>
    <organismsDiffer>false</organismsDiffer>
    <experiments>2</experiments>
</comment>
<comment type="interaction">
    <interactant intactId="EBI-21458417">
        <id>P55055-1</id>
    </interactant>
    <interactant intactId="EBI-78598">
        <id>P19793</id>
        <label>RXRA</label>
    </interactant>
    <organismsDiffer>false</organismsDiffer>
    <experiments>2</experiments>
</comment>
<comment type="subcellular location">
    <subcellularLocation>
        <location evidence="2">Nucleus</location>
    </subcellularLocation>
</comment>
<comment type="alternative products">
    <event type="alternative splicing"/>
    <isoform>
        <id>P55055-1</id>
        <name>1</name>
        <sequence type="displayed"/>
    </isoform>
    <isoform>
        <id>P55055-2</id>
        <name>2</name>
        <sequence type="described" ref="VSP_053789"/>
    </isoform>
</comment>
<comment type="tissue specificity">
    <text>Ubiquitous.</text>
</comment>
<comment type="PTM">
    <text evidence="6">Sumoylated by SUMO2 at Lys-409 and Lys-447 during the hepatic acute phase response, leading to promote interaction with GPS2 and prevent N-Cor corepressor complex dissociation.</text>
</comment>
<comment type="similarity">
    <text evidence="10">Belongs to the nuclear hormone receptor family. NR1 subfamily.</text>
</comment>
<accession>P55055</accession>
<accession>A8K490</accession>
<accession>B4DNM6</accession>
<accession>E7EWA6</accession>
<accession>Q12970</accession>
<accession>Q5I0Y1</accession>
<name>NR1H2_HUMAN</name>